<proteinExistence type="inferred from homology"/>
<feature type="chain" id="PRO_0000347102" description="Large ribosomal subunit protein uL30">
    <location>
        <begin position="1"/>
        <end position="60"/>
    </location>
</feature>
<comment type="subunit">
    <text evidence="1">Part of the 50S ribosomal subunit.</text>
</comment>
<comment type="similarity">
    <text evidence="1">Belongs to the universal ribosomal protein uL30 family.</text>
</comment>
<keyword id="KW-0687">Ribonucleoprotein</keyword>
<keyword id="KW-0689">Ribosomal protein</keyword>
<sequence length="60" mass="6815">MMAKTIKVTQVRSSIARLPKHKATLRGLGLRRINHTIELIDTPAIRGMINQVSYMVKVEE</sequence>
<organism>
    <name type="scientific">Histophilus somni (strain 2336)</name>
    <name type="common">Haemophilus somnus</name>
    <dbReference type="NCBI Taxonomy" id="228400"/>
    <lineage>
        <taxon>Bacteria</taxon>
        <taxon>Pseudomonadati</taxon>
        <taxon>Pseudomonadota</taxon>
        <taxon>Gammaproteobacteria</taxon>
        <taxon>Pasteurellales</taxon>
        <taxon>Pasteurellaceae</taxon>
        <taxon>Histophilus</taxon>
    </lineage>
</organism>
<reference key="1">
    <citation type="submission" date="2008-02" db="EMBL/GenBank/DDBJ databases">
        <title>Complete sequence of Haemophilus somnus 2336.</title>
        <authorList>
            <consortium name="US DOE Joint Genome Institute"/>
            <person name="Siddaramappa S."/>
            <person name="Duncan A.J."/>
            <person name="Challacombe J.F."/>
            <person name="Rainey D."/>
            <person name="Gillaspy A.F."/>
            <person name="Carson M."/>
            <person name="Gipson J."/>
            <person name="Gipson M."/>
            <person name="Bruce D."/>
            <person name="Detter J.C."/>
            <person name="Han C.S."/>
            <person name="Land M."/>
            <person name="Tapia R."/>
            <person name="Thompson L.S."/>
            <person name="Orvis J."/>
            <person name="Zaitshik J."/>
            <person name="Barnes G."/>
            <person name="Brettin T.S."/>
            <person name="Dyer D.W."/>
            <person name="Inzana T.J."/>
        </authorList>
    </citation>
    <scope>NUCLEOTIDE SEQUENCE [LARGE SCALE GENOMIC DNA]</scope>
    <source>
        <strain>2336</strain>
    </source>
</reference>
<dbReference type="EMBL" id="CP000947">
    <property type="protein sequence ID" value="ACA31767.1"/>
    <property type="molecule type" value="Genomic_DNA"/>
</dbReference>
<dbReference type="SMR" id="B0UX32"/>
<dbReference type="STRING" id="228400.HSM_1971"/>
<dbReference type="KEGG" id="hsm:HSM_1971"/>
<dbReference type="HOGENOM" id="CLU_131047_1_4_6"/>
<dbReference type="GO" id="GO:0022625">
    <property type="term" value="C:cytosolic large ribosomal subunit"/>
    <property type="evidence" value="ECO:0007669"/>
    <property type="project" value="TreeGrafter"/>
</dbReference>
<dbReference type="GO" id="GO:0003735">
    <property type="term" value="F:structural constituent of ribosome"/>
    <property type="evidence" value="ECO:0007669"/>
    <property type="project" value="InterPro"/>
</dbReference>
<dbReference type="GO" id="GO:0006412">
    <property type="term" value="P:translation"/>
    <property type="evidence" value="ECO:0007669"/>
    <property type="project" value="UniProtKB-UniRule"/>
</dbReference>
<dbReference type="CDD" id="cd01658">
    <property type="entry name" value="Ribosomal_L30"/>
    <property type="match status" value="1"/>
</dbReference>
<dbReference type="FunFam" id="3.30.1390.20:FF:000001">
    <property type="entry name" value="50S ribosomal protein L30"/>
    <property type="match status" value="1"/>
</dbReference>
<dbReference type="Gene3D" id="3.30.1390.20">
    <property type="entry name" value="Ribosomal protein L30, ferredoxin-like fold domain"/>
    <property type="match status" value="1"/>
</dbReference>
<dbReference type="HAMAP" id="MF_01371_B">
    <property type="entry name" value="Ribosomal_uL30_B"/>
    <property type="match status" value="1"/>
</dbReference>
<dbReference type="InterPro" id="IPR036919">
    <property type="entry name" value="Ribo_uL30_ferredoxin-like_sf"/>
</dbReference>
<dbReference type="InterPro" id="IPR005996">
    <property type="entry name" value="Ribosomal_uL30_bac-type"/>
</dbReference>
<dbReference type="InterPro" id="IPR018038">
    <property type="entry name" value="Ribosomal_uL30_CS"/>
</dbReference>
<dbReference type="InterPro" id="IPR016082">
    <property type="entry name" value="Ribosomal_uL30_ferredoxin-like"/>
</dbReference>
<dbReference type="NCBIfam" id="TIGR01308">
    <property type="entry name" value="rpmD_bact"/>
    <property type="match status" value="1"/>
</dbReference>
<dbReference type="PANTHER" id="PTHR15892:SF2">
    <property type="entry name" value="LARGE RIBOSOMAL SUBUNIT PROTEIN UL30M"/>
    <property type="match status" value="1"/>
</dbReference>
<dbReference type="PANTHER" id="PTHR15892">
    <property type="entry name" value="MITOCHONDRIAL RIBOSOMAL PROTEIN L30"/>
    <property type="match status" value="1"/>
</dbReference>
<dbReference type="Pfam" id="PF00327">
    <property type="entry name" value="Ribosomal_L30"/>
    <property type="match status" value="1"/>
</dbReference>
<dbReference type="PIRSF" id="PIRSF002211">
    <property type="entry name" value="Ribosomal_L30_bac-type"/>
    <property type="match status" value="1"/>
</dbReference>
<dbReference type="SUPFAM" id="SSF55129">
    <property type="entry name" value="Ribosomal protein L30p/L7e"/>
    <property type="match status" value="1"/>
</dbReference>
<dbReference type="PROSITE" id="PS00634">
    <property type="entry name" value="RIBOSOMAL_L30"/>
    <property type="match status" value="1"/>
</dbReference>
<gene>
    <name evidence="1" type="primary">rpmD</name>
    <name type="ordered locus">HSM_1971</name>
</gene>
<protein>
    <recommendedName>
        <fullName evidence="1">Large ribosomal subunit protein uL30</fullName>
    </recommendedName>
    <alternativeName>
        <fullName evidence="2">50S ribosomal protein L30</fullName>
    </alternativeName>
</protein>
<evidence type="ECO:0000255" key="1">
    <source>
        <dbReference type="HAMAP-Rule" id="MF_01371"/>
    </source>
</evidence>
<evidence type="ECO:0000305" key="2"/>
<name>RL30_HISS2</name>
<accession>B0UX32</accession>